<sequence>MSGHSKWATIKHAKGAADAKRGQLFTKFIKEISVAARMAGGDPQANPRLRTAILKARAANMPKDNIERAIKKGTGELSGSSYEELVYEGYAPGGVAVLVEVLTDNKNRAAANVRNLFSRNGGNLGSAGSVSYMFNRKGVIEYDSEQVDEEALMELALEAGAEDIQNAGGVLTVTTVPGTFETVLESLQAKGWESLSAGISMVPDTYLALDEETARKVLKMIDRLEEEEDVQAVYSNADIPSELVL</sequence>
<gene>
    <name type="ordered locus">TPASS_0474</name>
</gene>
<keyword id="KW-0963">Cytoplasm</keyword>
<keyword id="KW-0238">DNA-binding</keyword>
<keyword id="KW-0804">Transcription</keyword>
<keyword id="KW-0805">Transcription regulation</keyword>
<protein>
    <recommendedName>
        <fullName evidence="1">Probable transcriptional regulatory protein TPASS_0474</fullName>
    </recommendedName>
</protein>
<evidence type="ECO:0000255" key="1">
    <source>
        <dbReference type="HAMAP-Rule" id="MF_00693"/>
    </source>
</evidence>
<organism>
    <name type="scientific">Treponema pallidum subsp. pallidum (strain SS14)</name>
    <dbReference type="NCBI Taxonomy" id="455434"/>
    <lineage>
        <taxon>Bacteria</taxon>
        <taxon>Pseudomonadati</taxon>
        <taxon>Spirochaetota</taxon>
        <taxon>Spirochaetia</taxon>
        <taxon>Spirochaetales</taxon>
        <taxon>Treponemataceae</taxon>
        <taxon>Treponema</taxon>
    </lineage>
</organism>
<proteinExistence type="inferred from homology"/>
<name>Y474_TREPS</name>
<reference key="1">
    <citation type="journal article" date="2008" name="BMC Microbiol.">
        <title>Complete genome sequence of Treponema pallidum ssp. pallidum strain SS14 determined with oligonucleotide arrays.</title>
        <authorList>
            <person name="Matejkova P."/>
            <person name="Strouhal M."/>
            <person name="Smajs D."/>
            <person name="Norris S.J."/>
            <person name="Palzkill T."/>
            <person name="Petrosino J.F."/>
            <person name="Sodergren E."/>
            <person name="Norton J.E."/>
            <person name="Singh J."/>
            <person name="Richmond T.A."/>
            <person name="Molla M.N."/>
            <person name="Albert T.J."/>
            <person name="Weinstock G.M."/>
        </authorList>
    </citation>
    <scope>NUCLEOTIDE SEQUENCE [LARGE SCALE GENOMIC DNA]</scope>
    <source>
        <strain>SS14</strain>
    </source>
</reference>
<dbReference type="EMBL" id="CP000805">
    <property type="protein sequence ID" value="ACD70898.1"/>
    <property type="molecule type" value="Genomic_DNA"/>
</dbReference>
<dbReference type="RefSeq" id="WP_010881923.1">
    <property type="nucleotide sequence ID" value="NC_021508.1"/>
</dbReference>
<dbReference type="SMR" id="B2S369"/>
<dbReference type="KEGG" id="tpp:TPASS_0474"/>
<dbReference type="PATRIC" id="fig|455434.6.peg.474"/>
<dbReference type="Proteomes" id="UP000001202">
    <property type="component" value="Chromosome"/>
</dbReference>
<dbReference type="GO" id="GO:0005829">
    <property type="term" value="C:cytosol"/>
    <property type="evidence" value="ECO:0007669"/>
    <property type="project" value="TreeGrafter"/>
</dbReference>
<dbReference type="GO" id="GO:0003677">
    <property type="term" value="F:DNA binding"/>
    <property type="evidence" value="ECO:0007669"/>
    <property type="project" value="UniProtKB-UniRule"/>
</dbReference>
<dbReference type="GO" id="GO:0006355">
    <property type="term" value="P:regulation of DNA-templated transcription"/>
    <property type="evidence" value="ECO:0007669"/>
    <property type="project" value="UniProtKB-UniRule"/>
</dbReference>
<dbReference type="FunFam" id="1.10.10.200:FF:000002">
    <property type="entry name" value="Probable transcriptional regulatory protein CLM62_37755"/>
    <property type="match status" value="1"/>
</dbReference>
<dbReference type="FunFam" id="3.30.70.980:FF:000002">
    <property type="entry name" value="Probable transcriptional regulatory protein YebC"/>
    <property type="match status" value="1"/>
</dbReference>
<dbReference type="Gene3D" id="1.10.10.200">
    <property type="match status" value="1"/>
</dbReference>
<dbReference type="Gene3D" id="3.30.70.980">
    <property type="match status" value="2"/>
</dbReference>
<dbReference type="HAMAP" id="MF_00693">
    <property type="entry name" value="Transcrip_reg_TACO1"/>
    <property type="match status" value="1"/>
</dbReference>
<dbReference type="InterPro" id="IPR017856">
    <property type="entry name" value="Integrase-like_N"/>
</dbReference>
<dbReference type="InterPro" id="IPR048300">
    <property type="entry name" value="TACO1_YebC-like_2nd/3rd_dom"/>
</dbReference>
<dbReference type="InterPro" id="IPR049083">
    <property type="entry name" value="TACO1_YebC_N"/>
</dbReference>
<dbReference type="InterPro" id="IPR002876">
    <property type="entry name" value="Transcrip_reg_TACO1-like"/>
</dbReference>
<dbReference type="InterPro" id="IPR026564">
    <property type="entry name" value="Transcrip_reg_TACO1-like_dom3"/>
</dbReference>
<dbReference type="InterPro" id="IPR029072">
    <property type="entry name" value="YebC-like"/>
</dbReference>
<dbReference type="NCBIfam" id="NF001030">
    <property type="entry name" value="PRK00110.1"/>
    <property type="match status" value="1"/>
</dbReference>
<dbReference type="NCBIfam" id="NF009044">
    <property type="entry name" value="PRK12378.1"/>
    <property type="match status" value="1"/>
</dbReference>
<dbReference type="NCBIfam" id="TIGR01033">
    <property type="entry name" value="YebC/PmpR family DNA-binding transcriptional regulator"/>
    <property type="match status" value="1"/>
</dbReference>
<dbReference type="PANTHER" id="PTHR12532:SF6">
    <property type="entry name" value="TRANSCRIPTIONAL REGULATORY PROTEIN YEBC-RELATED"/>
    <property type="match status" value="1"/>
</dbReference>
<dbReference type="PANTHER" id="PTHR12532">
    <property type="entry name" value="TRANSLATIONAL ACTIVATOR OF CYTOCHROME C OXIDASE 1"/>
    <property type="match status" value="1"/>
</dbReference>
<dbReference type="Pfam" id="PF20772">
    <property type="entry name" value="TACO1_YebC_N"/>
    <property type="match status" value="1"/>
</dbReference>
<dbReference type="Pfam" id="PF01709">
    <property type="entry name" value="Transcrip_reg"/>
    <property type="match status" value="1"/>
</dbReference>
<dbReference type="SUPFAM" id="SSF75625">
    <property type="entry name" value="YebC-like"/>
    <property type="match status" value="1"/>
</dbReference>
<comment type="subcellular location">
    <subcellularLocation>
        <location evidence="1">Cytoplasm</location>
    </subcellularLocation>
</comment>
<comment type="similarity">
    <text evidence="1">Belongs to the TACO1 family.</text>
</comment>
<feature type="chain" id="PRO_1000132251" description="Probable transcriptional regulatory protein TPASS_0474">
    <location>
        <begin position="1"/>
        <end position="245"/>
    </location>
</feature>
<accession>B2S369</accession>